<gene>
    <name evidence="1" type="primary">atpD</name>
    <name type="ordered locus">ECH_0573</name>
</gene>
<accession>Q2GGP9</accession>
<evidence type="ECO:0000255" key="1">
    <source>
        <dbReference type="HAMAP-Rule" id="MF_01347"/>
    </source>
</evidence>
<evidence type="ECO:0000256" key="2">
    <source>
        <dbReference type="SAM" id="MobiDB-lite"/>
    </source>
</evidence>
<proteinExistence type="inferred from homology"/>
<keyword id="KW-0066">ATP synthesis</keyword>
<keyword id="KW-0067">ATP-binding</keyword>
<keyword id="KW-0997">Cell inner membrane</keyword>
<keyword id="KW-1003">Cell membrane</keyword>
<keyword id="KW-0139">CF(1)</keyword>
<keyword id="KW-0375">Hydrogen ion transport</keyword>
<keyword id="KW-0406">Ion transport</keyword>
<keyword id="KW-0472">Membrane</keyword>
<keyword id="KW-0547">Nucleotide-binding</keyword>
<keyword id="KW-1185">Reference proteome</keyword>
<keyword id="KW-1278">Translocase</keyword>
<keyword id="KW-0813">Transport</keyword>
<reference key="1">
    <citation type="journal article" date="2006" name="PLoS Genet.">
        <title>Comparative genomics of emerging human ehrlichiosis agents.</title>
        <authorList>
            <person name="Dunning Hotopp J.C."/>
            <person name="Lin M."/>
            <person name="Madupu R."/>
            <person name="Crabtree J."/>
            <person name="Angiuoli S.V."/>
            <person name="Eisen J.A."/>
            <person name="Seshadri R."/>
            <person name="Ren Q."/>
            <person name="Wu M."/>
            <person name="Utterback T.R."/>
            <person name="Smith S."/>
            <person name="Lewis M."/>
            <person name="Khouri H."/>
            <person name="Zhang C."/>
            <person name="Niu H."/>
            <person name="Lin Q."/>
            <person name="Ohashi N."/>
            <person name="Zhi N."/>
            <person name="Nelson W.C."/>
            <person name="Brinkac L.M."/>
            <person name="Dodson R.J."/>
            <person name="Rosovitz M.J."/>
            <person name="Sundaram J.P."/>
            <person name="Daugherty S.C."/>
            <person name="Davidsen T."/>
            <person name="Durkin A.S."/>
            <person name="Gwinn M.L."/>
            <person name="Haft D.H."/>
            <person name="Selengut J.D."/>
            <person name="Sullivan S.A."/>
            <person name="Zafar N."/>
            <person name="Zhou L."/>
            <person name="Benahmed F."/>
            <person name="Forberger H."/>
            <person name="Halpin R."/>
            <person name="Mulligan S."/>
            <person name="Robinson J."/>
            <person name="White O."/>
            <person name="Rikihisa Y."/>
            <person name="Tettelin H."/>
        </authorList>
    </citation>
    <scope>NUCLEOTIDE SEQUENCE [LARGE SCALE GENOMIC DNA]</scope>
    <source>
        <strain>ATCC CRL-10679 / Arkansas</strain>
    </source>
</reference>
<dbReference type="EC" id="7.1.2.2" evidence="1"/>
<dbReference type="EMBL" id="CP000236">
    <property type="protein sequence ID" value="ABD45591.1"/>
    <property type="molecule type" value="Genomic_DNA"/>
</dbReference>
<dbReference type="SMR" id="Q2GGP9"/>
<dbReference type="STRING" id="205920.ECH_0573"/>
<dbReference type="KEGG" id="ech:ECH_0573"/>
<dbReference type="eggNOG" id="COG0055">
    <property type="taxonomic scope" value="Bacteria"/>
</dbReference>
<dbReference type="HOGENOM" id="CLU_022398_0_2_5"/>
<dbReference type="OrthoDB" id="9801639at2"/>
<dbReference type="Proteomes" id="UP000008320">
    <property type="component" value="Chromosome"/>
</dbReference>
<dbReference type="GO" id="GO:0005886">
    <property type="term" value="C:plasma membrane"/>
    <property type="evidence" value="ECO:0007669"/>
    <property type="project" value="UniProtKB-SubCell"/>
</dbReference>
<dbReference type="GO" id="GO:0045259">
    <property type="term" value="C:proton-transporting ATP synthase complex"/>
    <property type="evidence" value="ECO:0007669"/>
    <property type="project" value="UniProtKB-KW"/>
</dbReference>
<dbReference type="GO" id="GO:0005524">
    <property type="term" value="F:ATP binding"/>
    <property type="evidence" value="ECO:0007669"/>
    <property type="project" value="UniProtKB-UniRule"/>
</dbReference>
<dbReference type="GO" id="GO:0016887">
    <property type="term" value="F:ATP hydrolysis activity"/>
    <property type="evidence" value="ECO:0007669"/>
    <property type="project" value="InterPro"/>
</dbReference>
<dbReference type="GO" id="GO:0046933">
    <property type="term" value="F:proton-transporting ATP synthase activity, rotational mechanism"/>
    <property type="evidence" value="ECO:0007669"/>
    <property type="project" value="UniProtKB-UniRule"/>
</dbReference>
<dbReference type="CDD" id="cd18110">
    <property type="entry name" value="ATP-synt_F1_beta_C"/>
    <property type="match status" value="1"/>
</dbReference>
<dbReference type="CDD" id="cd18115">
    <property type="entry name" value="ATP-synt_F1_beta_N"/>
    <property type="match status" value="1"/>
</dbReference>
<dbReference type="CDD" id="cd01133">
    <property type="entry name" value="F1-ATPase_beta_CD"/>
    <property type="match status" value="1"/>
</dbReference>
<dbReference type="FunFam" id="1.10.1140.10:FF:000001">
    <property type="entry name" value="ATP synthase subunit beta"/>
    <property type="match status" value="1"/>
</dbReference>
<dbReference type="FunFam" id="3.40.50.300:FF:000026">
    <property type="entry name" value="ATP synthase subunit beta"/>
    <property type="match status" value="1"/>
</dbReference>
<dbReference type="Gene3D" id="2.40.10.170">
    <property type="match status" value="1"/>
</dbReference>
<dbReference type="Gene3D" id="1.10.1140.10">
    <property type="entry name" value="Bovine Mitochondrial F1-atpase, Atp Synthase Beta Chain, Chain D, domain 3"/>
    <property type="match status" value="1"/>
</dbReference>
<dbReference type="Gene3D" id="3.40.50.300">
    <property type="entry name" value="P-loop containing nucleotide triphosphate hydrolases"/>
    <property type="match status" value="1"/>
</dbReference>
<dbReference type="HAMAP" id="MF_01347">
    <property type="entry name" value="ATP_synth_beta_bact"/>
    <property type="match status" value="1"/>
</dbReference>
<dbReference type="InterPro" id="IPR003593">
    <property type="entry name" value="AAA+_ATPase"/>
</dbReference>
<dbReference type="InterPro" id="IPR055190">
    <property type="entry name" value="ATP-synt_VA_C"/>
</dbReference>
<dbReference type="InterPro" id="IPR005722">
    <property type="entry name" value="ATP_synth_F1_bsu"/>
</dbReference>
<dbReference type="InterPro" id="IPR020003">
    <property type="entry name" value="ATPase_a/bsu_AS"/>
</dbReference>
<dbReference type="InterPro" id="IPR050053">
    <property type="entry name" value="ATPase_alpha/beta_chains"/>
</dbReference>
<dbReference type="InterPro" id="IPR004100">
    <property type="entry name" value="ATPase_F1/V1/A1_a/bsu_N"/>
</dbReference>
<dbReference type="InterPro" id="IPR036121">
    <property type="entry name" value="ATPase_F1/V1/A1_a/bsu_N_sf"/>
</dbReference>
<dbReference type="InterPro" id="IPR000194">
    <property type="entry name" value="ATPase_F1/V1/A1_a/bsu_nucl-bd"/>
</dbReference>
<dbReference type="InterPro" id="IPR024034">
    <property type="entry name" value="ATPase_F1/V1_b/a_C"/>
</dbReference>
<dbReference type="InterPro" id="IPR027417">
    <property type="entry name" value="P-loop_NTPase"/>
</dbReference>
<dbReference type="NCBIfam" id="TIGR01039">
    <property type="entry name" value="atpD"/>
    <property type="match status" value="1"/>
</dbReference>
<dbReference type="PANTHER" id="PTHR15184">
    <property type="entry name" value="ATP SYNTHASE"/>
    <property type="match status" value="1"/>
</dbReference>
<dbReference type="PANTHER" id="PTHR15184:SF71">
    <property type="entry name" value="ATP SYNTHASE SUBUNIT BETA, MITOCHONDRIAL"/>
    <property type="match status" value="1"/>
</dbReference>
<dbReference type="Pfam" id="PF00006">
    <property type="entry name" value="ATP-synt_ab"/>
    <property type="match status" value="1"/>
</dbReference>
<dbReference type="Pfam" id="PF02874">
    <property type="entry name" value="ATP-synt_ab_N"/>
    <property type="match status" value="1"/>
</dbReference>
<dbReference type="Pfam" id="PF22919">
    <property type="entry name" value="ATP-synt_VA_C"/>
    <property type="match status" value="1"/>
</dbReference>
<dbReference type="SMART" id="SM00382">
    <property type="entry name" value="AAA"/>
    <property type="match status" value="1"/>
</dbReference>
<dbReference type="SUPFAM" id="SSF47917">
    <property type="entry name" value="C-terminal domain of alpha and beta subunits of F1 ATP synthase"/>
    <property type="match status" value="1"/>
</dbReference>
<dbReference type="SUPFAM" id="SSF50615">
    <property type="entry name" value="N-terminal domain of alpha and beta subunits of F1 ATP synthase"/>
    <property type="match status" value="1"/>
</dbReference>
<dbReference type="SUPFAM" id="SSF52540">
    <property type="entry name" value="P-loop containing nucleoside triphosphate hydrolases"/>
    <property type="match status" value="1"/>
</dbReference>
<dbReference type="PROSITE" id="PS00152">
    <property type="entry name" value="ATPASE_ALPHA_BETA"/>
    <property type="match status" value="1"/>
</dbReference>
<name>ATPB_EHRCR</name>
<organism>
    <name type="scientific">Ehrlichia chaffeensis (strain ATCC CRL-10679 / Arkansas)</name>
    <dbReference type="NCBI Taxonomy" id="205920"/>
    <lineage>
        <taxon>Bacteria</taxon>
        <taxon>Pseudomonadati</taxon>
        <taxon>Pseudomonadota</taxon>
        <taxon>Alphaproteobacteria</taxon>
        <taxon>Rickettsiales</taxon>
        <taxon>Anaplasmataceae</taxon>
        <taxon>Ehrlichia</taxon>
    </lineage>
</organism>
<feature type="chain" id="PRO_0000254256" description="ATP synthase subunit beta">
    <location>
        <begin position="1"/>
        <end position="507"/>
    </location>
</feature>
<feature type="region of interest" description="Disordered" evidence="2">
    <location>
        <begin position="1"/>
        <end position="22"/>
    </location>
</feature>
<feature type="binding site" evidence="1">
    <location>
        <begin position="183"/>
        <end position="190"/>
    </location>
    <ligand>
        <name>ATP</name>
        <dbReference type="ChEBI" id="CHEBI:30616"/>
    </ligand>
</feature>
<sequence>MSGLASKAKSRVKSSKGKNSTNIHADELNEDVGVVVRVMTAVVDVKFASGKIPKILNALESKEIYNGKKLVLEVSQHISDSIVRCIALDGTDGLSRNDKFIDTGAPISVPVGRGTLGRVFDVLGNTIDECGPLEESSYFIKQIYSEIPKLTDQKIATEILVTGIKVIDLLAPYLKGGKVGLFGGAGVGKTVLIMELIHNIAKAHKGVSVFAGVGERTREGNDLYHEMIESGVINLENKDQSQAVLVYGQMNEPPGARLRVALSALTMAEYFRDAENQDVLFFVDNIFRFTQSGSEISALLGRIPSAVGYQPTLAAEMGAMQERITSTNSGSITSVQAIYVPADDLTDPAPATSFAHLDSTTVLSRQISELGIYPAVDPLDSTSQALSADVVGKEHYDVAKEVQRILQTYKSLQDIIAILGMDELSEEDKLIVARARKIQRFLSQPFHVAEVFTGAPGKFVSLEDTVLSFKGLVEGKYDHLPEAAFYMVGSIDDVIKKAELLQKEGKV</sequence>
<comment type="function">
    <text evidence="1">Produces ATP from ADP in the presence of a proton gradient across the membrane. The catalytic sites are hosted primarily by the beta subunits.</text>
</comment>
<comment type="catalytic activity">
    <reaction evidence="1">
        <text>ATP + H2O + 4 H(+)(in) = ADP + phosphate + 5 H(+)(out)</text>
        <dbReference type="Rhea" id="RHEA:57720"/>
        <dbReference type="ChEBI" id="CHEBI:15377"/>
        <dbReference type="ChEBI" id="CHEBI:15378"/>
        <dbReference type="ChEBI" id="CHEBI:30616"/>
        <dbReference type="ChEBI" id="CHEBI:43474"/>
        <dbReference type="ChEBI" id="CHEBI:456216"/>
        <dbReference type="EC" id="7.1.2.2"/>
    </reaction>
</comment>
<comment type="subunit">
    <text evidence="1">F-type ATPases have 2 components, CF(1) - the catalytic core - and CF(0) - the membrane proton channel. CF(1) has five subunits: alpha(3), beta(3), gamma(1), delta(1), epsilon(1). CF(0) has three main subunits: a(1), b(2) and c(9-12). The alpha and beta chains form an alternating ring which encloses part of the gamma chain. CF(1) is attached to CF(0) by a central stalk formed by the gamma and epsilon chains, while a peripheral stalk is formed by the delta and b chains.</text>
</comment>
<comment type="subcellular location">
    <subcellularLocation>
        <location evidence="1">Cell inner membrane</location>
        <topology evidence="1">Peripheral membrane protein</topology>
    </subcellularLocation>
</comment>
<comment type="similarity">
    <text evidence="1">Belongs to the ATPase alpha/beta chains family.</text>
</comment>
<protein>
    <recommendedName>
        <fullName evidence="1">ATP synthase subunit beta</fullName>
        <ecNumber evidence="1">7.1.2.2</ecNumber>
    </recommendedName>
    <alternativeName>
        <fullName evidence="1">ATP synthase F1 sector subunit beta</fullName>
    </alternativeName>
    <alternativeName>
        <fullName evidence="1">F-ATPase subunit beta</fullName>
    </alternativeName>
</protein>